<accession>Q3AEJ6</accession>
<protein>
    <recommendedName>
        <fullName>Methylaspartate ammonia-lyase 2</fullName>
        <shortName>MAL</shortName>
        <ecNumber>4.3.1.2</ecNumber>
    </recommendedName>
    <alternativeName>
        <fullName>3-methylaspartate ammonia-lyase 2</fullName>
    </alternativeName>
    <alternativeName>
        <fullName>Beta-methylaspartase 2</fullName>
    </alternativeName>
</protein>
<keyword id="KW-0456">Lyase</keyword>
<keyword id="KW-0460">Magnesium</keyword>
<keyword id="KW-0479">Metal-binding</keyword>
<keyword id="KW-1185">Reference proteome</keyword>
<sequence length="415" mass="46000">MKIIDALFAPGLTGFYFDDQEAIKKGAVHNGFWYEGNPQTPGYKRIRQKGEAILVMLVLENGEVAYGDCAAVQYSGTGGRDPLFTAEEFLPILENEIRPKLIGLELNSFRNLAHIFDRELTVNGKPLHTALRYGLTQALLDGVARAQKKLMAEVIAEEYQLPVIPEPVPIFVQTGDDLYTNADKAIIKRADVLPHALINNVEEKLGRQGEKLLAYIKWLKKRIFELAGDEYRPVIHIDVYGTVGLIFANDLEKIAGYLATLAHEAAPFKLRIEGPVDMGSLWGQIEALSKLREIIDRRGIPVEIVADEWCNTLEDIKLFADHKAGHMVQIKTPDLGGINNVVEAVLYAKMKGIGAYLGGTCNETDRSAQISVHLALATRPDQMLAKPGMGLDEGLMIVYNEMQRAIALLKRRGGK</sequence>
<evidence type="ECO:0000250" key="1"/>
<evidence type="ECO:0000305" key="2"/>
<organism>
    <name type="scientific">Carboxydothermus hydrogenoformans (strain ATCC BAA-161 / DSM 6008 / Z-2901)</name>
    <dbReference type="NCBI Taxonomy" id="246194"/>
    <lineage>
        <taxon>Bacteria</taxon>
        <taxon>Bacillati</taxon>
        <taxon>Bacillota</taxon>
        <taxon>Clostridia</taxon>
        <taxon>Thermoanaerobacterales</taxon>
        <taxon>Thermoanaerobacteraceae</taxon>
        <taxon>Carboxydothermus</taxon>
    </lineage>
</organism>
<comment type="function">
    <text evidence="1">Involved in the methylaspartate cycle. Catalyzes the formation of the alpha,beta-unsaturated bond by the reversible anti elimination of ammonia from L-threo-beta-methylaspartate (L-threo-(2S,3S)-3-methylaspartate) to give mesaconate (By similarity).</text>
</comment>
<comment type="catalytic activity">
    <reaction>
        <text>(2S,3S)-3-methyl-L-aspartate = mesaconate + NH4(+)</text>
        <dbReference type="Rhea" id="RHEA:12829"/>
        <dbReference type="ChEBI" id="CHEBI:28938"/>
        <dbReference type="ChEBI" id="CHEBI:36986"/>
        <dbReference type="ChEBI" id="CHEBI:58724"/>
        <dbReference type="EC" id="4.3.1.2"/>
    </reaction>
</comment>
<comment type="cofactor">
    <cofactor evidence="1">
        <name>Mg(2+)</name>
        <dbReference type="ChEBI" id="CHEBI:18420"/>
    </cofactor>
</comment>
<comment type="pathway">
    <text>Amino-acid degradation; L-glutamate degradation via mesaconate pathway; acetate and pyruvate from L-glutamate: step 2/4.</text>
</comment>
<comment type="subunit">
    <text evidence="1">Homodimer.</text>
</comment>
<comment type="similarity">
    <text evidence="2">Belongs to the methylaspartate ammonia-lyase family.</text>
</comment>
<gene>
    <name type="ordered locus">CHY_0582</name>
</gene>
<proteinExistence type="inferred from homology"/>
<dbReference type="EC" id="4.3.1.2"/>
<dbReference type="EMBL" id="CP000141">
    <property type="protein sequence ID" value="ABB16209.1"/>
    <property type="molecule type" value="Genomic_DNA"/>
</dbReference>
<dbReference type="RefSeq" id="WP_011343514.1">
    <property type="nucleotide sequence ID" value="NC_007503.1"/>
</dbReference>
<dbReference type="SMR" id="Q3AEJ6"/>
<dbReference type="STRING" id="246194.CHY_0582"/>
<dbReference type="KEGG" id="chy:CHY_0582"/>
<dbReference type="eggNOG" id="COG3799">
    <property type="taxonomic scope" value="Bacteria"/>
</dbReference>
<dbReference type="HOGENOM" id="CLU_055277_0_0_9"/>
<dbReference type="InParanoid" id="Q3AEJ6"/>
<dbReference type="OrthoDB" id="8630262at2"/>
<dbReference type="UniPathway" id="UPA00561">
    <property type="reaction ID" value="UER00618"/>
</dbReference>
<dbReference type="Proteomes" id="UP000002706">
    <property type="component" value="Chromosome"/>
</dbReference>
<dbReference type="GO" id="GO:0046872">
    <property type="term" value="F:metal ion binding"/>
    <property type="evidence" value="ECO:0007669"/>
    <property type="project" value="UniProtKB-KW"/>
</dbReference>
<dbReference type="GO" id="GO:0050096">
    <property type="term" value="F:methylaspartate ammonia-lyase activity"/>
    <property type="evidence" value="ECO:0007669"/>
    <property type="project" value="UniProtKB-EC"/>
</dbReference>
<dbReference type="GO" id="GO:0019553">
    <property type="term" value="P:glutamate catabolic process via L-citramalate"/>
    <property type="evidence" value="ECO:0007669"/>
    <property type="project" value="UniProtKB-UniPathway"/>
</dbReference>
<dbReference type="CDD" id="cd03314">
    <property type="entry name" value="MAL"/>
    <property type="match status" value="1"/>
</dbReference>
<dbReference type="Gene3D" id="3.20.20.120">
    <property type="entry name" value="Enolase-like C-terminal domain"/>
    <property type="match status" value="1"/>
</dbReference>
<dbReference type="Gene3D" id="3.30.390.10">
    <property type="entry name" value="Enolase-like, N-terminal domain"/>
    <property type="match status" value="1"/>
</dbReference>
<dbReference type="InterPro" id="IPR036849">
    <property type="entry name" value="Enolase-like_C_sf"/>
</dbReference>
<dbReference type="InterPro" id="IPR029017">
    <property type="entry name" value="Enolase-like_N"/>
</dbReference>
<dbReference type="InterPro" id="IPR006395">
    <property type="entry name" value="Me_Asp_am_lyase"/>
</dbReference>
<dbReference type="InterPro" id="IPR022662">
    <property type="entry name" value="MeAsp_NH4-lyase_C"/>
</dbReference>
<dbReference type="InterPro" id="IPR022665">
    <property type="entry name" value="MeAsp_NH4-lyase_N"/>
</dbReference>
<dbReference type="NCBIfam" id="TIGR01502">
    <property type="entry name" value="B_methylAsp_ase"/>
    <property type="match status" value="1"/>
</dbReference>
<dbReference type="PANTHER" id="PTHR48073:SF2">
    <property type="entry name" value="O-SUCCINYLBENZOATE SYNTHASE"/>
    <property type="match status" value="1"/>
</dbReference>
<dbReference type="PANTHER" id="PTHR48073">
    <property type="entry name" value="O-SUCCINYLBENZOATE SYNTHASE-RELATED"/>
    <property type="match status" value="1"/>
</dbReference>
<dbReference type="Pfam" id="PF07476">
    <property type="entry name" value="MAAL_C"/>
    <property type="match status" value="1"/>
</dbReference>
<dbReference type="Pfam" id="PF05034">
    <property type="entry name" value="MAAL_N"/>
    <property type="match status" value="1"/>
</dbReference>
<dbReference type="PIRSF" id="PIRSF017107">
    <property type="entry name" value="MAL"/>
    <property type="match status" value="1"/>
</dbReference>
<dbReference type="SFLD" id="SFLDS00001">
    <property type="entry name" value="Enolase"/>
    <property type="match status" value="1"/>
</dbReference>
<dbReference type="SFLD" id="SFLDF00007">
    <property type="entry name" value="methylaspartate_ammonia-lyase"/>
    <property type="match status" value="1"/>
</dbReference>
<dbReference type="SUPFAM" id="SSF51604">
    <property type="entry name" value="Enolase C-terminal domain-like"/>
    <property type="match status" value="1"/>
</dbReference>
<dbReference type="SUPFAM" id="SSF54826">
    <property type="entry name" value="Enolase N-terminal domain-like"/>
    <property type="match status" value="1"/>
</dbReference>
<reference key="1">
    <citation type="journal article" date="2005" name="PLoS Genet.">
        <title>Life in hot carbon monoxide: the complete genome sequence of Carboxydothermus hydrogenoformans Z-2901.</title>
        <authorList>
            <person name="Wu M."/>
            <person name="Ren Q."/>
            <person name="Durkin A.S."/>
            <person name="Daugherty S.C."/>
            <person name="Brinkac L.M."/>
            <person name="Dodson R.J."/>
            <person name="Madupu R."/>
            <person name="Sullivan S.A."/>
            <person name="Kolonay J.F."/>
            <person name="Nelson W.C."/>
            <person name="Tallon L.J."/>
            <person name="Jones K.M."/>
            <person name="Ulrich L.E."/>
            <person name="Gonzalez J.M."/>
            <person name="Zhulin I.B."/>
            <person name="Robb F.T."/>
            <person name="Eisen J.A."/>
        </authorList>
    </citation>
    <scope>NUCLEOTIDE SEQUENCE [LARGE SCALE GENOMIC DNA]</scope>
    <source>
        <strain>ATCC BAA-161 / DSM 6008 / Z-2901</strain>
    </source>
</reference>
<name>MAAL2_CARHZ</name>
<feature type="chain" id="PRO_0000429366" description="Methylaspartate ammonia-lyase 2">
    <location>
        <begin position="1"/>
        <end position="415"/>
    </location>
</feature>
<feature type="active site" description="Proton acceptor" evidence="1">
    <location>
        <position position="331"/>
    </location>
</feature>
<feature type="binding site" evidence="1">
    <location>
        <position position="173"/>
    </location>
    <ligand>
        <name>(2S,3S)-3-methyl-L-aspartate</name>
        <dbReference type="ChEBI" id="CHEBI:58724"/>
    </ligand>
</feature>
<feature type="binding site" evidence="1">
    <location>
        <position position="238"/>
    </location>
    <ligand>
        <name>Mg(2+)</name>
        <dbReference type="ChEBI" id="CHEBI:18420"/>
    </ligand>
</feature>
<feature type="binding site" evidence="1">
    <location>
        <position position="273"/>
    </location>
    <ligand>
        <name>Mg(2+)</name>
        <dbReference type="ChEBI" id="CHEBI:18420"/>
    </ligand>
</feature>
<feature type="binding site" evidence="1">
    <location>
        <position position="307"/>
    </location>
    <ligand>
        <name>Mg(2+)</name>
        <dbReference type="ChEBI" id="CHEBI:18420"/>
    </ligand>
</feature>
<feature type="binding site" evidence="1">
    <location>
        <position position="329"/>
    </location>
    <ligand>
        <name>(2S,3S)-3-methyl-L-aspartate</name>
        <dbReference type="ChEBI" id="CHEBI:58724"/>
    </ligand>
</feature>
<feature type="binding site" evidence="1">
    <location>
        <begin position="360"/>
        <end position="361"/>
    </location>
    <ligand>
        <name>(2S,3S)-3-methyl-L-aspartate</name>
        <dbReference type="ChEBI" id="CHEBI:58724"/>
    </ligand>
</feature>
<feature type="site" description="Transition state stabilizer" evidence="1">
    <location>
        <position position="195"/>
    </location>
</feature>